<evidence type="ECO:0000250" key="1"/>
<evidence type="ECO:0000255" key="2">
    <source>
        <dbReference type="PROSITE-ProRule" id="PRU00251"/>
    </source>
</evidence>
<evidence type="ECO:0000255" key="3">
    <source>
        <dbReference type="PROSITE-ProRule" id="PRU00629"/>
    </source>
</evidence>
<organism>
    <name type="scientific">Brassica oleracea var. alboglabra</name>
    <name type="common">Chinese kale</name>
    <name type="synonym">Brassica alboglabra</name>
    <dbReference type="NCBI Taxonomy" id="3714"/>
    <lineage>
        <taxon>Eukaryota</taxon>
        <taxon>Viridiplantae</taxon>
        <taxon>Streptophyta</taxon>
        <taxon>Embryophyta</taxon>
        <taxon>Tracheophyta</taxon>
        <taxon>Spermatophyta</taxon>
        <taxon>Magnoliopsida</taxon>
        <taxon>eudicotyledons</taxon>
        <taxon>Gunneridae</taxon>
        <taxon>Pentapetalae</taxon>
        <taxon>rosids</taxon>
        <taxon>malvids</taxon>
        <taxon>Brassicales</taxon>
        <taxon>Brassicaceae</taxon>
        <taxon>Brassiceae</taxon>
        <taxon>Brassica</taxon>
    </lineage>
</organism>
<feature type="chain" id="PRO_0000417132" description="Floral homeotic protein APETALA 1 C">
    <location>
        <begin position="1"/>
        <end position="256"/>
    </location>
</feature>
<feature type="domain" description="MADS-box" evidence="2">
    <location>
        <begin position="1"/>
        <end position="61"/>
    </location>
</feature>
<feature type="domain" description="K-box" evidence="3">
    <location>
        <begin position="88"/>
        <end position="178"/>
    </location>
</feature>
<sequence>MGRGRVQLKRIENKINRQVTFSKRRAGLFKKAHEISVLCDAEVALVVFSHKGKLFEYSTDSCMEKILERYERYSYAERQLIAPESDVNTNWSMEYNRLKAKIELLERNQRHYLGEDLQAMSPKELQNLEQQLDTALKHIRSRKNQLMYDSVNELQRKEKAIQEQNSMLSKQIKEREKVLMAQQEQWDQQNHGQNMPSPPPPQQHQIQHPYMLSHQPSPFLNMGGLYQEEDPMAMRRNDLDLSLEPVYNCNLGCFAA</sequence>
<protein>
    <recommendedName>
        <fullName>Floral homeotic protein APETALA 1 C</fullName>
        <shortName>BoaAP1-c</shortName>
    </recommendedName>
    <alternativeName>
        <fullName>Agamous-like MADS-box protein AP1-C</fullName>
    </alternativeName>
</protein>
<dbReference type="EMBL" id="EU642504">
    <property type="protein sequence ID" value="ACG60676.1"/>
    <property type="molecule type" value="Genomic_DNA"/>
</dbReference>
<dbReference type="SMR" id="B4YPV4"/>
<dbReference type="GO" id="GO:0005634">
    <property type="term" value="C:nucleus"/>
    <property type="evidence" value="ECO:0007669"/>
    <property type="project" value="UniProtKB-SubCell"/>
</dbReference>
<dbReference type="GO" id="GO:0003700">
    <property type="term" value="F:DNA-binding transcription factor activity"/>
    <property type="evidence" value="ECO:0007669"/>
    <property type="project" value="InterPro"/>
</dbReference>
<dbReference type="GO" id="GO:0046983">
    <property type="term" value="F:protein dimerization activity"/>
    <property type="evidence" value="ECO:0007669"/>
    <property type="project" value="InterPro"/>
</dbReference>
<dbReference type="GO" id="GO:0000977">
    <property type="term" value="F:RNA polymerase II transcription regulatory region sequence-specific DNA binding"/>
    <property type="evidence" value="ECO:0007669"/>
    <property type="project" value="InterPro"/>
</dbReference>
<dbReference type="GO" id="GO:0030154">
    <property type="term" value="P:cell differentiation"/>
    <property type="evidence" value="ECO:0007669"/>
    <property type="project" value="UniProtKB-KW"/>
</dbReference>
<dbReference type="GO" id="GO:0009908">
    <property type="term" value="P:flower development"/>
    <property type="evidence" value="ECO:0007669"/>
    <property type="project" value="UniProtKB-KW"/>
</dbReference>
<dbReference type="GO" id="GO:0045944">
    <property type="term" value="P:positive regulation of transcription by RNA polymerase II"/>
    <property type="evidence" value="ECO:0007669"/>
    <property type="project" value="InterPro"/>
</dbReference>
<dbReference type="CDD" id="cd00265">
    <property type="entry name" value="MADS_MEF2_like"/>
    <property type="match status" value="1"/>
</dbReference>
<dbReference type="FunFam" id="3.40.1810.10:FF:000003">
    <property type="entry name" value="MADS-box transcription factor MADS-MC"/>
    <property type="match status" value="1"/>
</dbReference>
<dbReference type="Gene3D" id="3.40.1810.10">
    <property type="entry name" value="Transcription factor, MADS-box"/>
    <property type="match status" value="1"/>
</dbReference>
<dbReference type="InterPro" id="IPR050142">
    <property type="entry name" value="MADS-box/MEF2_TF"/>
</dbReference>
<dbReference type="InterPro" id="IPR033896">
    <property type="entry name" value="MEF2-like_N"/>
</dbReference>
<dbReference type="InterPro" id="IPR002487">
    <property type="entry name" value="TF_Kbox"/>
</dbReference>
<dbReference type="InterPro" id="IPR002100">
    <property type="entry name" value="TF_MADSbox"/>
</dbReference>
<dbReference type="InterPro" id="IPR036879">
    <property type="entry name" value="TF_MADSbox_sf"/>
</dbReference>
<dbReference type="PANTHER" id="PTHR48019">
    <property type="entry name" value="SERUM RESPONSE FACTOR HOMOLOG"/>
    <property type="match status" value="1"/>
</dbReference>
<dbReference type="Pfam" id="PF01486">
    <property type="entry name" value="K-box"/>
    <property type="match status" value="1"/>
</dbReference>
<dbReference type="Pfam" id="PF00319">
    <property type="entry name" value="SRF-TF"/>
    <property type="match status" value="1"/>
</dbReference>
<dbReference type="PRINTS" id="PR00404">
    <property type="entry name" value="MADSDOMAIN"/>
</dbReference>
<dbReference type="SMART" id="SM00432">
    <property type="entry name" value="MADS"/>
    <property type="match status" value="1"/>
</dbReference>
<dbReference type="SUPFAM" id="SSF55455">
    <property type="entry name" value="SRF-like"/>
    <property type="match status" value="1"/>
</dbReference>
<dbReference type="PROSITE" id="PS51297">
    <property type="entry name" value="K_BOX"/>
    <property type="match status" value="1"/>
</dbReference>
<dbReference type="PROSITE" id="PS00350">
    <property type="entry name" value="MADS_BOX_1"/>
    <property type="match status" value="1"/>
</dbReference>
<dbReference type="PROSITE" id="PS50066">
    <property type="entry name" value="MADS_BOX_2"/>
    <property type="match status" value="1"/>
</dbReference>
<gene>
    <name type="primary">AP1C</name>
    <name type="ORF">BoB028L01.100</name>
</gene>
<proteinExistence type="inferred from homology"/>
<reference key="1">
    <citation type="submission" date="2008-04" db="EMBL/GenBank/DDBJ databases">
        <title>Long range sequence analysis of chromosome regions flanking triplicated BoAP1 loci in Brassica oleracea.</title>
        <authorList>
            <person name="Barker G.C."/>
            <person name="Ryder C.D."/>
            <person name="Edwards K."/>
            <person name="King G.J."/>
        </authorList>
    </citation>
    <scope>NUCLEOTIDE SEQUENCE [GENOMIC DNA]</scope>
</reference>
<accession>B4YPV4</accession>
<name>AP1C_BRAOA</name>
<comment type="function">
    <text evidence="1">Transcription factor that promotes early floral meristem identity in synergy with LEAFY. Displays a redundant function with CAULIFLOWER in the up-regulation of LEAFY. Required subsequently for the transition of an inflorescence meristem into a floral meristem, and for the normal development of sepals and petals in flowers. Regulates positively B class homeotic proteins (By similarity).</text>
</comment>
<comment type="subunit">
    <text evidence="1">Homodimer capable of binding to CArG-box sequences.</text>
</comment>
<comment type="subcellular location">
    <subcellularLocation>
        <location evidence="2">Nucleus</location>
    </subcellularLocation>
</comment>
<keyword id="KW-0010">Activator</keyword>
<keyword id="KW-0175">Coiled coil</keyword>
<keyword id="KW-0217">Developmental protein</keyword>
<keyword id="KW-0221">Differentiation</keyword>
<keyword id="KW-0238">DNA-binding</keyword>
<keyword id="KW-0287">Flowering</keyword>
<keyword id="KW-0539">Nucleus</keyword>
<keyword id="KW-0804">Transcription</keyword>
<keyword id="KW-0805">Transcription regulation</keyword>